<reference key="1">
    <citation type="journal article" date="2002" name="Nucleic Acids Res.">
        <title>Genome sequence of Shigella flexneri 2a: insights into pathogenicity through comparison with genomes of Escherichia coli K12 and O157.</title>
        <authorList>
            <person name="Jin Q."/>
            <person name="Yuan Z."/>
            <person name="Xu J."/>
            <person name="Wang Y."/>
            <person name="Shen Y."/>
            <person name="Lu W."/>
            <person name="Wang J."/>
            <person name="Liu H."/>
            <person name="Yang J."/>
            <person name="Yang F."/>
            <person name="Zhang X."/>
            <person name="Zhang J."/>
            <person name="Yang G."/>
            <person name="Wu H."/>
            <person name="Qu D."/>
            <person name="Dong J."/>
            <person name="Sun L."/>
            <person name="Xue Y."/>
            <person name="Zhao A."/>
            <person name="Gao Y."/>
            <person name="Zhu J."/>
            <person name="Kan B."/>
            <person name="Ding K."/>
            <person name="Chen S."/>
            <person name="Cheng H."/>
            <person name="Yao Z."/>
            <person name="He B."/>
            <person name="Chen R."/>
            <person name="Ma D."/>
            <person name="Qiang B."/>
            <person name="Wen Y."/>
            <person name="Hou Y."/>
            <person name="Yu J."/>
        </authorList>
    </citation>
    <scope>NUCLEOTIDE SEQUENCE [LARGE SCALE GENOMIC DNA]</scope>
    <source>
        <strain>301 / Serotype 2a</strain>
    </source>
</reference>
<reference key="2">
    <citation type="journal article" date="2003" name="Infect. Immun.">
        <title>Complete genome sequence and comparative genomics of Shigella flexneri serotype 2a strain 2457T.</title>
        <authorList>
            <person name="Wei J."/>
            <person name="Goldberg M.B."/>
            <person name="Burland V."/>
            <person name="Venkatesan M.M."/>
            <person name="Deng W."/>
            <person name="Fournier G."/>
            <person name="Mayhew G.F."/>
            <person name="Plunkett G. III"/>
            <person name="Rose D.J."/>
            <person name="Darling A."/>
            <person name="Mau B."/>
            <person name="Perna N.T."/>
            <person name="Payne S.M."/>
            <person name="Runyen-Janecky L.J."/>
            <person name="Zhou S."/>
            <person name="Schwartz D.C."/>
            <person name="Blattner F.R."/>
        </authorList>
    </citation>
    <scope>NUCLEOTIDE SEQUENCE [LARGE SCALE GENOMIC DNA]</scope>
    <source>
        <strain>ATCC 700930 / 2457T / Serotype 2a</strain>
    </source>
</reference>
<keyword id="KW-0997">Cell inner membrane</keyword>
<keyword id="KW-1003">Cell membrane</keyword>
<keyword id="KW-0328">Glycosyltransferase</keyword>
<keyword id="KW-0460">Magnesium</keyword>
<keyword id="KW-0472">Membrane</keyword>
<keyword id="KW-0479">Metal-binding</keyword>
<keyword id="KW-0660">Purine salvage</keyword>
<keyword id="KW-1185">Reference proteome</keyword>
<keyword id="KW-0808">Transferase</keyword>
<proteinExistence type="inferred from homology"/>
<comment type="function">
    <text evidence="1">Purine salvage pathway enzyme that catalyzes the transfer of the ribosyl-5-phosphate group from 5-phospho-alpha-D-ribose 1-diphosphate (PRPP) to the N9 position of the 6-oxopurines guanine and xanthine to form the corresponding ribonucleotides GMP (guanosine 5'-monophosphate) and XMP (xanthosine 5'-monophosphate), with the release of PPi. To a lesser extent, also acts on hypoxanthine.</text>
</comment>
<comment type="catalytic activity">
    <reaction evidence="1">
        <text>GMP + diphosphate = guanine + 5-phospho-alpha-D-ribose 1-diphosphate</text>
        <dbReference type="Rhea" id="RHEA:25424"/>
        <dbReference type="ChEBI" id="CHEBI:16235"/>
        <dbReference type="ChEBI" id="CHEBI:33019"/>
        <dbReference type="ChEBI" id="CHEBI:58017"/>
        <dbReference type="ChEBI" id="CHEBI:58115"/>
    </reaction>
    <physiologicalReaction direction="right-to-left" evidence="1">
        <dbReference type="Rhea" id="RHEA:25426"/>
    </physiologicalReaction>
</comment>
<comment type="catalytic activity">
    <reaction evidence="1">
        <text>XMP + diphosphate = xanthine + 5-phospho-alpha-D-ribose 1-diphosphate</text>
        <dbReference type="Rhea" id="RHEA:10800"/>
        <dbReference type="ChEBI" id="CHEBI:17712"/>
        <dbReference type="ChEBI" id="CHEBI:33019"/>
        <dbReference type="ChEBI" id="CHEBI:57464"/>
        <dbReference type="ChEBI" id="CHEBI:58017"/>
        <dbReference type="EC" id="2.4.2.22"/>
    </reaction>
    <physiologicalReaction direction="right-to-left" evidence="1">
        <dbReference type="Rhea" id="RHEA:10802"/>
    </physiologicalReaction>
</comment>
<comment type="catalytic activity">
    <reaction evidence="1">
        <text>IMP + diphosphate = hypoxanthine + 5-phospho-alpha-D-ribose 1-diphosphate</text>
        <dbReference type="Rhea" id="RHEA:17973"/>
        <dbReference type="ChEBI" id="CHEBI:17368"/>
        <dbReference type="ChEBI" id="CHEBI:33019"/>
        <dbReference type="ChEBI" id="CHEBI:58017"/>
        <dbReference type="ChEBI" id="CHEBI:58053"/>
    </reaction>
    <physiologicalReaction direction="right-to-left" evidence="1">
        <dbReference type="Rhea" id="RHEA:17975"/>
    </physiologicalReaction>
</comment>
<comment type="cofactor">
    <cofactor evidence="1">
        <name>Mg(2+)</name>
        <dbReference type="ChEBI" id="CHEBI:18420"/>
    </cofactor>
</comment>
<comment type="pathway">
    <text evidence="1">Purine metabolism; GMP biosynthesis via salvage pathway; GMP from guanine: step 1/1.</text>
</comment>
<comment type="pathway">
    <text evidence="1">Purine metabolism; XMP biosynthesis via salvage pathway; XMP from xanthine: step 1/1.</text>
</comment>
<comment type="subunit">
    <text evidence="1">Homotetramer.</text>
</comment>
<comment type="subcellular location">
    <subcellularLocation>
        <location evidence="1">Cell inner membrane</location>
        <topology evidence="1">Peripheral membrane protein</topology>
    </subcellularLocation>
</comment>
<comment type="similarity">
    <text evidence="1">Belongs to the purine/pyrimidine phosphoribosyltransferase family. XGPT subfamily.</text>
</comment>
<protein>
    <recommendedName>
        <fullName evidence="1">Xanthine-guanine phosphoribosyltransferase</fullName>
        <shortName evidence="1">XGPRT</shortName>
        <ecNumber evidence="1">2.4.2.-</ecNumber>
        <ecNumber evidence="1">2.4.2.22</ecNumber>
    </recommendedName>
    <alternativeName>
        <fullName evidence="1">Xanthine phosphoribosyltransferase</fullName>
    </alternativeName>
</protein>
<evidence type="ECO:0000255" key="1">
    <source>
        <dbReference type="HAMAP-Rule" id="MF_01903"/>
    </source>
</evidence>
<feature type="chain" id="PRO_0000139687" description="Xanthine-guanine phosphoribosyltransferase">
    <location>
        <begin position="1"/>
        <end position="152"/>
    </location>
</feature>
<feature type="binding site" evidence="1">
    <location>
        <begin position="37"/>
        <end position="38"/>
    </location>
    <ligand>
        <name>5-phospho-alpha-D-ribose 1-diphosphate</name>
        <dbReference type="ChEBI" id="CHEBI:58017"/>
    </ligand>
</feature>
<feature type="binding site" evidence="1">
    <location>
        <position position="69"/>
    </location>
    <ligand>
        <name>5-phospho-alpha-D-ribose 1-diphosphate</name>
        <dbReference type="ChEBI" id="CHEBI:58017"/>
    </ligand>
</feature>
<feature type="binding site" evidence="1">
    <location>
        <position position="69"/>
    </location>
    <ligand>
        <name>GMP</name>
        <dbReference type="ChEBI" id="CHEBI:58115"/>
    </ligand>
</feature>
<feature type="binding site" evidence="1">
    <location>
        <begin position="88"/>
        <end position="96"/>
    </location>
    <ligand>
        <name>5-phospho-alpha-D-ribose 1-diphosphate</name>
        <dbReference type="ChEBI" id="CHEBI:58017"/>
    </ligand>
</feature>
<feature type="binding site" evidence="1">
    <location>
        <position position="89"/>
    </location>
    <ligand>
        <name>Mg(2+)</name>
        <dbReference type="ChEBI" id="CHEBI:18420"/>
    </ligand>
</feature>
<feature type="binding site" evidence="1">
    <location>
        <begin position="92"/>
        <end position="96"/>
    </location>
    <ligand>
        <name>GMP</name>
        <dbReference type="ChEBI" id="CHEBI:58115"/>
    </ligand>
</feature>
<feature type="binding site" evidence="1">
    <location>
        <position position="92"/>
    </location>
    <ligand>
        <name>guanine</name>
        <dbReference type="ChEBI" id="CHEBI:16235"/>
    </ligand>
</feature>
<feature type="binding site" evidence="1">
    <location>
        <position position="92"/>
    </location>
    <ligand>
        <name>xanthine</name>
        <dbReference type="ChEBI" id="CHEBI:17712"/>
    </ligand>
</feature>
<feature type="binding site" evidence="1">
    <location>
        <begin position="134"/>
        <end position="135"/>
    </location>
    <ligand>
        <name>GMP</name>
        <dbReference type="ChEBI" id="CHEBI:58115"/>
    </ligand>
</feature>
<feature type="binding site" evidence="1">
    <location>
        <position position="135"/>
    </location>
    <ligand>
        <name>guanine</name>
        <dbReference type="ChEBI" id="CHEBI:16235"/>
    </ligand>
</feature>
<feature type="binding site" evidence="1">
    <location>
        <position position="135"/>
    </location>
    <ligand>
        <name>xanthine</name>
        <dbReference type="ChEBI" id="CHEBI:17712"/>
    </ligand>
</feature>
<dbReference type="EC" id="2.4.2.-" evidence="1"/>
<dbReference type="EC" id="2.4.2.22" evidence="1"/>
<dbReference type="EMBL" id="AE005674">
    <property type="protein sequence ID" value="AAN41945.1"/>
    <property type="molecule type" value="Genomic_DNA"/>
</dbReference>
<dbReference type="EMBL" id="AE014073">
    <property type="protein sequence ID" value="AAP15832.1"/>
    <property type="molecule type" value="Genomic_DNA"/>
</dbReference>
<dbReference type="RefSeq" id="NP_706238.1">
    <property type="nucleotide sequence ID" value="NC_004337.2"/>
</dbReference>
<dbReference type="RefSeq" id="WP_001291990.1">
    <property type="nucleotide sequence ID" value="NZ_WPGW01000070.1"/>
</dbReference>
<dbReference type="SMR" id="P0A9M7"/>
<dbReference type="STRING" id="198214.SF0286"/>
<dbReference type="PaxDb" id="198214-SF0286"/>
<dbReference type="GeneID" id="1024293"/>
<dbReference type="GeneID" id="93777155"/>
<dbReference type="KEGG" id="sfl:SF0286"/>
<dbReference type="KEGG" id="sfx:S0307"/>
<dbReference type="PATRIC" id="fig|198214.7.peg.327"/>
<dbReference type="HOGENOM" id="CLU_080904_3_0_6"/>
<dbReference type="UniPathway" id="UPA00602">
    <property type="reaction ID" value="UER00658"/>
</dbReference>
<dbReference type="UniPathway" id="UPA00909">
    <property type="reaction ID" value="UER00887"/>
</dbReference>
<dbReference type="Proteomes" id="UP000001006">
    <property type="component" value="Chromosome"/>
</dbReference>
<dbReference type="Proteomes" id="UP000002673">
    <property type="component" value="Chromosome"/>
</dbReference>
<dbReference type="GO" id="GO:0005829">
    <property type="term" value="C:cytosol"/>
    <property type="evidence" value="ECO:0007669"/>
    <property type="project" value="TreeGrafter"/>
</dbReference>
<dbReference type="GO" id="GO:0005886">
    <property type="term" value="C:plasma membrane"/>
    <property type="evidence" value="ECO:0007669"/>
    <property type="project" value="UniProtKB-SubCell"/>
</dbReference>
<dbReference type="GO" id="GO:0052657">
    <property type="term" value="F:guanine phosphoribosyltransferase activity"/>
    <property type="evidence" value="ECO:0007669"/>
    <property type="project" value="RHEA"/>
</dbReference>
<dbReference type="GO" id="GO:0004422">
    <property type="term" value="F:hypoxanthine phosphoribosyltransferase activity"/>
    <property type="evidence" value="ECO:0007669"/>
    <property type="project" value="TreeGrafter"/>
</dbReference>
<dbReference type="GO" id="GO:0000287">
    <property type="term" value="F:magnesium ion binding"/>
    <property type="evidence" value="ECO:0007669"/>
    <property type="project" value="UniProtKB-UniRule"/>
</dbReference>
<dbReference type="GO" id="GO:0000310">
    <property type="term" value="F:xanthine phosphoribosyltransferase activity"/>
    <property type="evidence" value="ECO:0007669"/>
    <property type="project" value="UniProtKB-UniRule"/>
</dbReference>
<dbReference type="GO" id="GO:0032263">
    <property type="term" value="P:GMP salvage"/>
    <property type="evidence" value="ECO:0007669"/>
    <property type="project" value="UniProtKB-UniRule"/>
</dbReference>
<dbReference type="GO" id="GO:0032264">
    <property type="term" value="P:IMP salvage"/>
    <property type="evidence" value="ECO:0007669"/>
    <property type="project" value="TreeGrafter"/>
</dbReference>
<dbReference type="GO" id="GO:0006166">
    <property type="term" value="P:purine ribonucleoside salvage"/>
    <property type="evidence" value="ECO:0007669"/>
    <property type="project" value="UniProtKB-KW"/>
</dbReference>
<dbReference type="GO" id="GO:0032265">
    <property type="term" value="P:XMP salvage"/>
    <property type="evidence" value="ECO:0007669"/>
    <property type="project" value="UniProtKB-UniRule"/>
</dbReference>
<dbReference type="CDD" id="cd06223">
    <property type="entry name" value="PRTases_typeI"/>
    <property type="match status" value="1"/>
</dbReference>
<dbReference type="FunFam" id="3.40.50.2020:FF:000009">
    <property type="entry name" value="Xanthine phosphoribosyltransferase"/>
    <property type="match status" value="1"/>
</dbReference>
<dbReference type="Gene3D" id="3.40.50.2020">
    <property type="match status" value="1"/>
</dbReference>
<dbReference type="HAMAP" id="MF_01903">
    <property type="entry name" value="XGPRT"/>
    <property type="match status" value="1"/>
</dbReference>
<dbReference type="InterPro" id="IPR000836">
    <property type="entry name" value="PRibTrfase_dom"/>
</dbReference>
<dbReference type="InterPro" id="IPR029057">
    <property type="entry name" value="PRTase-like"/>
</dbReference>
<dbReference type="InterPro" id="IPR023747">
    <property type="entry name" value="Xanthine_Guanine_PRibTrfase"/>
</dbReference>
<dbReference type="NCBIfam" id="NF006613">
    <property type="entry name" value="PRK09177.1"/>
    <property type="match status" value="1"/>
</dbReference>
<dbReference type="PANTHER" id="PTHR39563">
    <property type="entry name" value="XANTHINE PHOSPHORIBOSYLTRANSFERASE"/>
    <property type="match status" value="1"/>
</dbReference>
<dbReference type="PANTHER" id="PTHR39563:SF1">
    <property type="entry name" value="XANTHINE-GUANINE PHOSPHORIBOSYLTRANSFERASE"/>
    <property type="match status" value="1"/>
</dbReference>
<dbReference type="Pfam" id="PF00156">
    <property type="entry name" value="Pribosyltran"/>
    <property type="match status" value="1"/>
</dbReference>
<dbReference type="SUPFAM" id="SSF53271">
    <property type="entry name" value="PRTase-like"/>
    <property type="match status" value="1"/>
</dbReference>
<dbReference type="PROSITE" id="PS00103">
    <property type="entry name" value="PUR_PYR_PR_TRANSFER"/>
    <property type="match status" value="1"/>
</dbReference>
<gene>
    <name evidence="1" type="primary">gpt</name>
    <name type="ordered locus">SF0286</name>
    <name type="ordered locus">S0307</name>
</gene>
<organism>
    <name type="scientific">Shigella flexneri</name>
    <dbReference type="NCBI Taxonomy" id="623"/>
    <lineage>
        <taxon>Bacteria</taxon>
        <taxon>Pseudomonadati</taxon>
        <taxon>Pseudomonadota</taxon>
        <taxon>Gammaproteobacteria</taxon>
        <taxon>Enterobacterales</taxon>
        <taxon>Enterobacteriaceae</taxon>
        <taxon>Shigella</taxon>
    </lineage>
</organism>
<name>XGPT_SHIFL</name>
<sequence length="152" mass="16971">MSEKYIVTWDMLQIHARKLASRLMPSEQWKGIIAVSRGGLVPGALLARELGIRHVDTVCISSYDHDNQRELKVLKRAEGDGEGFIVIDDLVDTGGTAVAIREMYPKAHFVTIFAKPAGRPLVDDYVVDIPQDTWIEQPWDMGVVFVPPISGR</sequence>
<accession>P0A9M7</accession>
<accession>P00501</accession>